<protein>
    <recommendedName>
        <fullName>E3 ubiquitin-protein ligase znrf3</fullName>
        <ecNumber>2.3.2.27</ecNumber>
    </recommendedName>
    <alternativeName>
        <fullName>RING-type E3 ubiquitin transferase znrf3</fullName>
    </alternativeName>
    <alternativeName>
        <fullName>Zinc/RING finger protein 3</fullName>
    </alternativeName>
</protein>
<dbReference type="EC" id="2.3.2.27"/>
<dbReference type="EMBL" id="CT737139">
    <property type="protein sequence ID" value="CAN88080.1"/>
    <property type="status" value="ALT_SEQ"/>
    <property type="molecule type" value="Genomic_DNA"/>
</dbReference>
<dbReference type="PDB" id="4C84">
    <property type="method" value="X-ray"/>
    <property type="resolution" value="1.60 A"/>
    <property type="chains" value="A/B=30-181"/>
</dbReference>
<dbReference type="PDB" id="4C85">
    <property type="method" value="X-ray"/>
    <property type="resolution" value="2.50 A"/>
    <property type="chains" value="A/B=30-181"/>
</dbReference>
<dbReference type="PDBsum" id="4C84"/>
<dbReference type="PDBsum" id="4C85"/>
<dbReference type="SMR" id="A5WWA0"/>
<dbReference type="FunCoup" id="A5WWA0">
    <property type="interactions" value="1460"/>
</dbReference>
<dbReference type="STRING" id="7955.ENSDARP00000154288"/>
<dbReference type="PaxDb" id="7955-ENSDARP00000085090"/>
<dbReference type="AGR" id="ZFIN:ZDB-GENE-070705-263"/>
<dbReference type="ZFIN" id="ZDB-GENE-070705-263">
    <property type="gene designation" value="znrf3"/>
</dbReference>
<dbReference type="eggNOG" id="KOG0800">
    <property type="taxonomic scope" value="Eukaryota"/>
</dbReference>
<dbReference type="InParanoid" id="A5WWA0"/>
<dbReference type="TreeFam" id="TF317074"/>
<dbReference type="Reactome" id="R-DRE-4641263">
    <property type="pathway name" value="Regulation of FZD by ubiquitination"/>
</dbReference>
<dbReference type="UniPathway" id="UPA00143"/>
<dbReference type="ChiTaRS" id="znrf3">
    <property type="organism name" value="zebrafish"/>
</dbReference>
<dbReference type="EvolutionaryTrace" id="A5WWA0"/>
<dbReference type="PRO" id="PR:A5WWA0"/>
<dbReference type="Proteomes" id="UP000000437">
    <property type="component" value="Unplaced"/>
</dbReference>
<dbReference type="GO" id="GO:0005886">
    <property type="term" value="C:plasma membrane"/>
    <property type="evidence" value="ECO:0000250"/>
    <property type="project" value="UniProtKB"/>
</dbReference>
<dbReference type="GO" id="GO:0005109">
    <property type="term" value="F:frizzled binding"/>
    <property type="evidence" value="ECO:0000318"/>
    <property type="project" value="GO_Central"/>
</dbReference>
<dbReference type="GO" id="GO:0061630">
    <property type="term" value="F:ubiquitin protein ligase activity"/>
    <property type="evidence" value="ECO:0000318"/>
    <property type="project" value="GO_Central"/>
</dbReference>
<dbReference type="GO" id="GO:0004842">
    <property type="term" value="F:ubiquitin-protein transferase activity"/>
    <property type="evidence" value="ECO:0000250"/>
    <property type="project" value="UniProtKB"/>
</dbReference>
<dbReference type="GO" id="GO:0008270">
    <property type="term" value="F:zinc ion binding"/>
    <property type="evidence" value="ECO:0007669"/>
    <property type="project" value="UniProtKB-KW"/>
</dbReference>
<dbReference type="GO" id="GO:0090090">
    <property type="term" value="P:negative regulation of canonical Wnt signaling pathway"/>
    <property type="evidence" value="ECO:0000250"/>
    <property type="project" value="UniProtKB"/>
</dbReference>
<dbReference type="GO" id="GO:2000051">
    <property type="term" value="P:negative regulation of non-canonical Wnt signaling pathway"/>
    <property type="evidence" value="ECO:0000250"/>
    <property type="project" value="UniProtKB"/>
</dbReference>
<dbReference type="GO" id="GO:0016567">
    <property type="term" value="P:protein ubiquitination"/>
    <property type="evidence" value="ECO:0000250"/>
    <property type="project" value="UniProtKB"/>
</dbReference>
<dbReference type="GO" id="GO:0072089">
    <property type="term" value="P:stem cell proliferation"/>
    <property type="evidence" value="ECO:0000250"/>
    <property type="project" value="UniProtKB"/>
</dbReference>
<dbReference type="GO" id="GO:0006511">
    <property type="term" value="P:ubiquitin-dependent protein catabolic process"/>
    <property type="evidence" value="ECO:0000250"/>
    <property type="project" value="UniProtKB"/>
</dbReference>
<dbReference type="GO" id="GO:0038018">
    <property type="term" value="P:Wnt receptor catabolic process"/>
    <property type="evidence" value="ECO:0000250"/>
    <property type="project" value="UniProtKB"/>
</dbReference>
<dbReference type="GO" id="GO:0016055">
    <property type="term" value="P:Wnt signaling pathway"/>
    <property type="evidence" value="ECO:0007669"/>
    <property type="project" value="UniProtKB-KW"/>
</dbReference>
<dbReference type="CDD" id="cd16799">
    <property type="entry name" value="RING-H2_ZNRF3"/>
    <property type="match status" value="1"/>
</dbReference>
<dbReference type="FunFam" id="3.50.30.30:FF:000018">
    <property type="entry name" value="E3 ubiquitin-protein ligase ZNRF3"/>
    <property type="match status" value="1"/>
</dbReference>
<dbReference type="FunFam" id="3.30.40.10:FF:000075">
    <property type="entry name" value="Putative e3 ubiquitin-protein ligase rnf43"/>
    <property type="match status" value="1"/>
</dbReference>
<dbReference type="Gene3D" id="3.50.30.30">
    <property type="match status" value="1"/>
</dbReference>
<dbReference type="Gene3D" id="3.30.40.10">
    <property type="entry name" value="Zinc/RING finger domain, C3HC4 (zinc finger)"/>
    <property type="match status" value="1"/>
</dbReference>
<dbReference type="InterPro" id="IPR001841">
    <property type="entry name" value="Znf_RING"/>
</dbReference>
<dbReference type="InterPro" id="IPR013083">
    <property type="entry name" value="Znf_RING/FYVE/PHD"/>
</dbReference>
<dbReference type="InterPro" id="IPR040700">
    <property type="entry name" value="ZNRF-3_ecto"/>
</dbReference>
<dbReference type="InterPro" id="IPR051073">
    <property type="entry name" value="ZNRF3_Arkadia_E3_ligases"/>
</dbReference>
<dbReference type="InterPro" id="IPR045903">
    <property type="entry name" value="ZNRF3_Znf_RING"/>
</dbReference>
<dbReference type="PANTHER" id="PTHR16200">
    <property type="entry name" value="RING ZINC FINGER"/>
    <property type="match status" value="1"/>
</dbReference>
<dbReference type="Pfam" id="PF13639">
    <property type="entry name" value="zf-RING_2"/>
    <property type="match status" value="1"/>
</dbReference>
<dbReference type="Pfam" id="PF18212">
    <property type="entry name" value="ZNRF_3_ecto"/>
    <property type="match status" value="1"/>
</dbReference>
<dbReference type="SMART" id="SM00184">
    <property type="entry name" value="RING"/>
    <property type="match status" value="1"/>
</dbReference>
<dbReference type="SUPFAM" id="SSF57850">
    <property type="entry name" value="RING/U-box"/>
    <property type="match status" value="1"/>
</dbReference>
<dbReference type="PROSITE" id="PS50089">
    <property type="entry name" value="ZF_RING_2"/>
    <property type="match status" value="1"/>
</dbReference>
<sequence>MMILPRTGFGRGADSVVLVLLWVLGSVLAKDTAFVEVVLFESSPNGDYTTYTTGLQGRFSRAGATISAEGEIVQMHPLGLCNNNDEEDLYEYGWVGVVKLEQPELDPSCLTVLGKAKRAVQRGATAVIFDVSENPDAIDQLNQVSEDPLKRPVVYVKGADAVKLMNIVNKQKVARARIQHRPPRVRPTEYFDMGIFLAFFVVVSLVCLILLIKIKLKQRRSQSSMNRMAIQALEKMETCKFKAKFKGQREASCGASDSVSSSSTSDCAICLEKYIDGEELRVIPCAHRFHKKCVDPWLLQHHTCPHCRHNIIDQKKGNPGAVCLDPGNPVHGRQQRVVLPVHYPGRVHRAGQVTAYPTRTSMDPHGNPITVLTVDQHPEQGLYPSQSSFIRGYPALHLDHTLNPHHCGLEHRGPAYPQTHTFKRPKFHGRNFSRAACFSQYETMYQHYYFQGLTFPQPEGQPSNGLHKGHNRPFQPGLLYPTVVHMAPASSSRLGDSGSTSGLSCYHGHRSVCSGYLADCPGSDSSSSSGQCHCSSSDSMLDCTEVSNQGVYGSCSTFRSSLSSDYDPYVYRSKSPCRGSAGEAGAVFSAAPPADDTSAPVSGMIDCLQPPGGACYSSGDQLSNCSLEPNCSNHSSVETRELTSTTSAGPLEGNVAERSHNSVKPCGEQGVACNCCFEVPKLNLERKGKEGEDRGHCRWATEAQAVASSQNFYSVSTEQLPSPDHVSYDGLPCCFYTEMTVHRGGANHYAEDCSVNIQYAQTDSDGCMGQGCCELAQRIPIIPEDTDCELGLGPEPQTSLLSSRLTTEREERTSSEDTCDLFFTSGQCRGQVYQQPQDEEARALFSSKCNAVSETQGSSTSSFDGSGL</sequence>
<evidence type="ECO:0000250" key="1">
    <source>
        <dbReference type="UniProtKB" id="Q08D68"/>
    </source>
</evidence>
<evidence type="ECO:0000250" key="2">
    <source>
        <dbReference type="UniProtKB" id="Q9ULT6"/>
    </source>
</evidence>
<evidence type="ECO:0000255" key="3"/>
<evidence type="ECO:0000255" key="4">
    <source>
        <dbReference type="PROSITE-ProRule" id="PRU00175"/>
    </source>
</evidence>
<evidence type="ECO:0000256" key="5">
    <source>
        <dbReference type="SAM" id="MobiDB-lite"/>
    </source>
</evidence>
<evidence type="ECO:0000269" key="6">
    <source>
    </source>
</evidence>
<evidence type="ECO:0000305" key="7"/>
<evidence type="ECO:0007829" key="8">
    <source>
        <dbReference type="PDB" id="4C84"/>
    </source>
</evidence>
<evidence type="ECO:0007829" key="9">
    <source>
        <dbReference type="PDB" id="4C85"/>
    </source>
</evidence>
<proteinExistence type="evidence at protein level"/>
<gene>
    <name type="primary">znrf3</name>
    <name type="ORF">si:dkeyp-7c9.3</name>
</gene>
<accession>A5WWA0</accession>
<feature type="signal peptide" evidence="3">
    <location>
        <begin position="1"/>
        <end position="29"/>
    </location>
</feature>
<feature type="chain" id="PRO_0000418383" description="E3 ubiquitin-protein ligase znrf3">
    <location>
        <begin position="30"/>
        <end position="868"/>
    </location>
</feature>
<feature type="topological domain" description="Extracellular" evidence="3">
    <location>
        <begin position="30"/>
        <end position="193"/>
    </location>
</feature>
<feature type="transmembrane region" description="Helical" evidence="3">
    <location>
        <begin position="194"/>
        <end position="214"/>
    </location>
</feature>
<feature type="topological domain" description="Cytoplasmic" evidence="3">
    <location>
        <begin position="215"/>
        <end position="868"/>
    </location>
</feature>
<feature type="zinc finger region" description="RING-type; atypical" evidence="4">
    <location>
        <begin position="267"/>
        <end position="308"/>
    </location>
</feature>
<feature type="region of interest" description="Disordered" evidence="5">
    <location>
        <begin position="792"/>
        <end position="813"/>
    </location>
</feature>
<feature type="strand" evidence="8">
    <location>
        <begin position="32"/>
        <end position="42"/>
    </location>
</feature>
<feature type="strand" evidence="8">
    <location>
        <begin position="48"/>
        <end position="59"/>
    </location>
</feature>
<feature type="strand" evidence="8">
    <location>
        <begin position="68"/>
        <end position="74"/>
    </location>
</feature>
<feature type="helix" evidence="8">
    <location>
        <begin position="77"/>
        <end position="81"/>
    </location>
</feature>
<feature type="strand" evidence="8">
    <location>
        <begin position="95"/>
        <end position="99"/>
    </location>
</feature>
<feature type="helix" evidence="8">
    <location>
        <begin position="103"/>
        <end position="105"/>
    </location>
</feature>
<feature type="helix" evidence="8">
    <location>
        <begin position="112"/>
        <end position="121"/>
    </location>
</feature>
<feature type="strand" evidence="8">
    <location>
        <begin position="125"/>
        <end position="130"/>
    </location>
</feature>
<feature type="helix" evidence="8">
    <location>
        <begin position="136"/>
        <end position="141"/>
    </location>
</feature>
<feature type="strand" evidence="9">
    <location>
        <begin position="149"/>
        <end position="151"/>
    </location>
</feature>
<feature type="strand" evidence="8">
    <location>
        <begin position="153"/>
        <end position="156"/>
    </location>
</feature>
<feature type="helix" evidence="8">
    <location>
        <begin position="158"/>
        <end position="168"/>
    </location>
</feature>
<feature type="strand" evidence="8">
    <location>
        <begin position="172"/>
        <end position="179"/>
    </location>
</feature>
<keyword id="KW-0002">3D-structure</keyword>
<keyword id="KW-1003">Cell membrane</keyword>
<keyword id="KW-0472">Membrane</keyword>
<keyword id="KW-0479">Metal-binding</keyword>
<keyword id="KW-1185">Reference proteome</keyword>
<keyword id="KW-0732">Signal</keyword>
<keyword id="KW-0808">Transferase</keyword>
<keyword id="KW-0812">Transmembrane</keyword>
<keyword id="KW-1133">Transmembrane helix</keyword>
<keyword id="KW-0833">Ubl conjugation pathway</keyword>
<keyword id="KW-0879">Wnt signaling pathway</keyword>
<keyword id="KW-0862">Zinc</keyword>
<keyword id="KW-0863">Zinc-finger</keyword>
<organism>
    <name type="scientific">Danio rerio</name>
    <name type="common">Zebrafish</name>
    <name type="synonym">Brachydanio rerio</name>
    <dbReference type="NCBI Taxonomy" id="7955"/>
    <lineage>
        <taxon>Eukaryota</taxon>
        <taxon>Metazoa</taxon>
        <taxon>Chordata</taxon>
        <taxon>Craniata</taxon>
        <taxon>Vertebrata</taxon>
        <taxon>Euteleostomi</taxon>
        <taxon>Actinopterygii</taxon>
        <taxon>Neopterygii</taxon>
        <taxon>Teleostei</taxon>
        <taxon>Ostariophysi</taxon>
        <taxon>Cypriniformes</taxon>
        <taxon>Danionidae</taxon>
        <taxon>Danioninae</taxon>
        <taxon>Danio</taxon>
    </lineage>
</organism>
<name>ZNRF3_DANRE</name>
<reference key="1">
    <citation type="journal article" date="2013" name="Nature">
        <title>The zebrafish reference genome sequence and its relationship to the human genome.</title>
        <authorList>
            <person name="Howe K."/>
            <person name="Clark M.D."/>
            <person name="Torroja C.F."/>
            <person name="Torrance J."/>
            <person name="Berthelot C."/>
            <person name="Muffato M."/>
            <person name="Collins J.E."/>
            <person name="Humphray S."/>
            <person name="McLaren K."/>
            <person name="Matthews L."/>
            <person name="McLaren S."/>
            <person name="Sealy I."/>
            <person name="Caccamo M."/>
            <person name="Churcher C."/>
            <person name="Scott C."/>
            <person name="Barrett J.C."/>
            <person name="Koch R."/>
            <person name="Rauch G.J."/>
            <person name="White S."/>
            <person name="Chow W."/>
            <person name="Kilian B."/>
            <person name="Quintais L.T."/>
            <person name="Guerra-Assuncao J.A."/>
            <person name="Zhou Y."/>
            <person name="Gu Y."/>
            <person name="Yen J."/>
            <person name="Vogel J.H."/>
            <person name="Eyre T."/>
            <person name="Redmond S."/>
            <person name="Banerjee R."/>
            <person name="Chi J."/>
            <person name="Fu B."/>
            <person name="Langley E."/>
            <person name="Maguire S.F."/>
            <person name="Laird G.K."/>
            <person name="Lloyd D."/>
            <person name="Kenyon E."/>
            <person name="Donaldson S."/>
            <person name="Sehra H."/>
            <person name="Almeida-King J."/>
            <person name="Loveland J."/>
            <person name="Trevanion S."/>
            <person name="Jones M."/>
            <person name="Quail M."/>
            <person name="Willey D."/>
            <person name="Hunt A."/>
            <person name="Burton J."/>
            <person name="Sims S."/>
            <person name="McLay K."/>
            <person name="Plumb B."/>
            <person name="Davis J."/>
            <person name="Clee C."/>
            <person name="Oliver K."/>
            <person name="Clark R."/>
            <person name="Riddle C."/>
            <person name="Elliot D."/>
            <person name="Threadgold G."/>
            <person name="Harden G."/>
            <person name="Ware D."/>
            <person name="Begum S."/>
            <person name="Mortimore B."/>
            <person name="Kerry G."/>
            <person name="Heath P."/>
            <person name="Phillimore B."/>
            <person name="Tracey A."/>
            <person name="Corby N."/>
            <person name="Dunn M."/>
            <person name="Johnson C."/>
            <person name="Wood J."/>
            <person name="Clark S."/>
            <person name="Pelan S."/>
            <person name="Griffiths G."/>
            <person name="Smith M."/>
            <person name="Glithero R."/>
            <person name="Howden P."/>
            <person name="Barker N."/>
            <person name="Lloyd C."/>
            <person name="Stevens C."/>
            <person name="Harley J."/>
            <person name="Holt K."/>
            <person name="Panagiotidis G."/>
            <person name="Lovell J."/>
            <person name="Beasley H."/>
            <person name="Henderson C."/>
            <person name="Gordon D."/>
            <person name="Auger K."/>
            <person name="Wright D."/>
            <person name="Collins J."/>
            <person name="Raisen C."/>
            <person name="Dyer L."/>
            <person name="Leung K."/>
            <person name="Robertson L."/>
            <person name="Ambridge K."/>
            <person name="Leongamornlert D."/>
            <person name="McGuire S."/>
            <person name="Gilderthorp R."/>
            <person name="Griffiths C."/>
            <person name="Manthravadi D."/>
            <person name="Nichol S."/>
            <person name="Barker G."/>
            <person name="Whitehead S."/>
            <person name="Kay M."/>
            <person name="Brown J."/>
            <person name="Murnane C."/>
            <person name="Gray E."/>
            <person name="Humphries M."/>
            <person name="Sycamore N."/>
            <person name="Barker D."/>
            <person name="Saunders D."/>
            <person name="Wallis J."/>
            <person name="Babbage A."/>
            <person name="Hammond S."/>
            <person name="Mashreghi-Mohammadi M."/>
            <person name="Barr L."/>
            <person name="Martin S."/>
            <person name="Wray P."/>
            <person name="Ellington A."/>
            <person name="Matthews N."/>
            <person name="Ellwood M."/>
            <person name="Woodmansey R."/>
            <person name="Clark G."/>
            <person name="Cooper J."/>
            <person name="Tromans A."/>
            <person name="Grafham D."/>
            <person name="Skuce C."/>
            <person name="Pandian R."/>
            <person name="Andrews R."/>
            <person name="Harrison E."/>
            <person name="Kimberley A."/>
            <person name="Garnett J."/>
            <person name="Fosker N."/>
            <person name="Hall R."/>
            <person name="Garner P."/>
            <person name="Kelly D."/>
            <person name="Bird C."/>
            <person name="Palmer S."/>
            <person name="Gehring I."/>
            <person name="Berger A."/>
            <person name="Dooley C.M."/>
            <person name="Ersan-Urun Z."/>
            <person name="Eser C."/>
            <person name="Geiger H."/>
            <person name="Geisler M."/>
            <person name="Karotki L."/>
            <person name="Kirn A."/>
            <person name="Konantz J."/>
            <person name="Konantz M."/>
            <person name="Oberlander M."/>
            <person name="Rudolph-Geiger S."/>
            <person name="Teucke M."/>
            <person name="Lanz C."/>
            <person name="Raddatz G."/>
            <person name="Osoegawa K."/>
            <person name="Zhu B."/>
            <person name="Rapp A."/>
            <person name="Widaa S."/>
            <person name="Langford C."/>
            <person name="Yang F."/>
            <person name="Schuster S.C."/>
            <person name="Carter N.P."/>
            <person name="Harrow J."/>
            <person name="Ning Z."/>
            <person name="Herrero J."/>
            <person name="Searle S.M."/>
            <person name="Enright A."/>
            <person name="Geisler R."/>
            <person name="Plasterk R.H."/>
            <person name="Lee C."/>
            <person name="Westerfield M."/>
            <person name="de Jong P.J."/>
            <person name="Zon L.I."/>
            <person name="Postlethwait J.H."/>
            <person name="Nusslein-Volhard C."/>
            <person name="Hubbard T.J."/>
            <person name="Roest Crollius H."/>
            <person name="Rogers J."/>
            <person name="Stemple D.L."/>
        </authorList>
    </citation>
    <scope>NUCLEOTIDE SEQUENCE [LARGE SCALE GENOMIC DNA]</scope>
    <source>
        <strain>Tuebingen</strain>
    </source>
</reference>
<reference key="2">
    <citation type="journal article" date="2012" name="Nature">
        <title>ZNRF3 promotes Wnt receptor turnover in an R-spondin-sensitive manner.</title>
        <authorList>
            <person name="Hao H.X."/>
            <person name="Xie Y."/>
            <person name="Zhang Y."/>
            <person name="Charlat O."/>
            <person name="Oster E."/>
            <person name="Avello M."/>
            <person name="Lei H."/>
            <person name="Mickanin C."/>
            <person name="Liu D."/>
            <person name="Ruffner H."/>
            <person name="Mao X."/>
            <person name="Ma Q."/>
            <person name="Zamponi R."/>
            <person name="Bouwmeester T."/>
            <person name="Finan P.M."/>
            <person name="Kirschner M.W."/>
            <person name="Porter J.A."/>
            <person name="Serluca F.C."/>
            <person name="Cong F."/>
        </authorList>
    </citation>
    <scope>FUNCTION</scope>
</reference>
<comment type="function">
    <text evidence="1 6">E3 ubiquitin-protein ligase that acts as a negative regulator of the Wnt signaling pathway by mediating the ubiquitination and subsequent degradation of Wnt receptor complex components (PubMed:22575959). Along with RSPO2 and RNF43, constitutes a master switch that governs limb specification (By similarity).</text>
</comment>
<comment type="catalytic activity">
    <reaction>
        <text>S-ubiquitinyl-[E2 ubiquitin-conjugating enzyme]-L-cysteine + [acceptor protein]-L-lysine = [E2 ubiquitin-conjugating enzyme]-L-cysteine + N(6)-ubiquitinyl-[acceptor protein]-L-lysine.</text>
        <dbReference type="EC" id="2.3.2.27"/>
    </reaction>
</comment>
<comment type="pathway">
    <text>Protein modification; protein ubiquitination.</text>
</comment>
<comment type="subcellular location">
    <subcellularLocation>
        <location evidence="2">Cell membrane</location>
        <topology evidence="3">Single-pass type I membrane protein</topology>
    </subcellularLocation>
</comment>
<comment type="similarity">
    <text evidence="7">Belongs to the ZNRF3 family.</text>
</comment>
<comment type="sequence caution" evidence="7">
    <conflict type="erroneous gene model prediction">
        <sequence resource="EMBL-CDS" id="CAN88080"/>
    </conflict>
</comment>